<keyword id="KW-0963">Cytoplasm</keyword>
<keyword id="KW-0378">Hydrolase</keyword>
<keyword id="KW-0464">Manganese</keyword>
<keyword id="KW-0479">Metal-binding</keyword>
<keyword id="KW-1185">Reference proteome</keyword>
<proteinExistence type="inferred from homology"/>
<accession>Q2FWY1</accession>
<dbReference type="EC" id="3.6.1.1" evidence="1"/>
<dbReference type="EMBL" id="CP000253">
    <property type="protein sequence ID" value="ABD31188.1"/>
    <property type="molecule type" value="Genomic_DNA"/>
</dbReference>
<dbReference type="RefSeq" id="WP_001140871.1">
    <property type="nucleotide sequence ID" value="NZ_LS483365.1"/>
</dbReference>
<dbReference type="RefSeq" id="YP_500630.1">
    <property type="nucleotide sequence ID" value="NC_007795.1"/>
</dbReference>
<dbReference type="SMR" id="Q2FWY1"/>
<dbReference type="STRING" id="93061.SAOUHSC_02140"/>
<dbReference type="PaxDb" id="1280-SAXN108_2020"/>
<dbReference type="GeneID" id="3921837"/>
<dbReference type="KEGG" id="sao:SAOUHSC_02140"/>
<dbReference type="PATRIC" id="fig|93061.5.peg.1941"/>
<dbReference type="eggNOG" id="COG1227">
    <property type="taxonomic scope" value="Bacteria"/>
</dbReference>
<dbReference type="HOGENOM" id="CLU_025243_0_1_9"/>
<dbReference type="OrthoDB" id="9766150at2"/>
<dbReference type="PRO" id="PR:Q2FWY1"/>
<dbReference type="Proteomes" id="UP000008816">
    <property type="component" value="Chromosome"/>
</dbReference>
<dbReference type="GO" id="GO:0005737">
    <property type="term" value="C:cytoplasm"/>
    <property type="evidence" value="ECO:0000318"/>
    <property type="project" value="GO_Central"/>
</dbReference>
<dbReference type="GO" id="GO:0004427">
    <property type="term" value="F:inorganic diphosphate phosphatase activity"/>
    <property type="evidence" value="ECO:0007669"/>
    <property type="project" value="UniProtKB-UniRule"/>
</dbReference>
<dbReference type="GO" id="GO:0030145">
    <property type="term" value="F:manganese ion binding"/>
    <property type="evidence" value="ECO:0007669"/>
    <property type="project" value="UniProtKB-UniRule"/>
</dbReference>
<dbReference type="FunFam" id="3.10.310.20:FF:000001">
    <property type="entry name" value="Probable manganese-dependent inorganic pyrophosphatase"/>
    <property type="match status" value="1"/>
</dbReference>
<dbReference type="FunFam" id="3.90.1640.10:FF:000001">
    <property type="entry name" value="Probable manganese-dependent inorganic pyrophosphatase"/>
    <property type="match status" value="1"/>
</dbReference>
<dbReference type="Gene3D" id="3.10.310.20">
    <property type="entry name" value="DHHA2 domain"/>
    <property type="match status" value="1"/>
</dbReference>
<dbReference type="Gene3D" id="3.90.1640.10">
    <property type="entry name" value="inorganic pyrophosphatase (n-terminal core)"/>
    <property type="match status" value="1"/>
</dbReference>
<dbReference type="HAMAP" id="MF_00207">
    <property type="entry name" value="PPase_C"/>
    <property type="match status" value="1"/>
</dbReference>
<dbReference type="InterPro" id="IPR001667">
    <property type="entry name" value="DDH_dom"/>
</dbReference>
<dbReference type="InterPro" id="IPR038763">
    <property type="entry name" value="DHH_sf"/>
</dbReference>
<dbReference type="InterPro" id="IPR004097">
    <property type="entry name" value="DHHA2"/>
</dbReference>
<dbReference type="InterPro" id="IPR038222">
    <property type="entry name" value="DHHA2_dom_sf"/>
</dbReference>
<dbReference type="InterPro" id="IPR022934">
    <property type="entry name" value="Mn-dep_inorganic_PyrPase"/>
</dbReference>
<dbReference type="NCBIfam" id="NF003877">
    <property type="entry name" value="PRK05427.1"/>
    <property type="match status" value="1"/>
</dbReference>
<dbReference type="PANTHER" id="PTHR12112">
    <property type="entry name" value="BNIP - RELATED"/>
    <property type="match status" value="1"/>
</dbReference>
<dbReference type="PANTHER" id="PTHR12112:SF22">
    <property type="entry name" value="MANGANESE-DEPENDENT INORGANIC PYROPHOSPHATASE-RELATED"/>
    <property type="match status" value="1"/>
</dbReference>
<dbReference type="Pfam" id="PF01368">
    <property type="entry name" value="DHH"/>
    <property type="match status" value="1"/>
</dbReference>
<dbReference type="Pfam" id="PF02833">
    <property type="entry name" value="DHHA2"/>
    <property type="match status" value="1"/>
</dbReference>
<dbReference type="SMART" id="SM01131">
    <property type="entry name" value="DHHA2"/>
    <property type="match status" value="1"/>
</dbReference>
<dbReference type="SUPFAM" id="SSF64182">
    <property type="entry name" value="DHH phosphoesterases"/>
    <property type="match status" value="1"/>
</dbReference>
<evidence type="ECO:0000255" key="1">
    <source>
        <dbReference type="HAMAP-Rule" id="MF_00207"/>
    </source>
</evidence>
<reference key="1">
    <citation type="book" date="2006" name="Gram positive pathogens, 2nd edition">
        <title>The Staphylococcus aureus NCTC 8325 genome.</title>
        <editorList>
            <person name="Fischetti V."/>
            <person name="Novick R."/>
            <person name="Ferretti J."/>
            <person name="Portnoy D."/>
            <person name="Rood J."/>
        </editorList>
        <authorList>
            <person name="Gillaspy A.F."/>
            <person name="Worrell V."/>
            <person name="Orvis J."/>
            <person name="Roe B.A."/>
            <person name="Dyer D.W."/>
            <person name="Iandolo J.J."/>
        </authorList>
    </citation>
    <scope>NUCLEOTIDE SEQUENCE [LARGE SCALE GENOMIC DNA]</scope>
    <source>
        <strain>NCTC 8325 / PS 47</strain>
    </source>
</reference>
<protein>
    <recommendedName>
        <fullName evidence="1">Probable manganese-dependent inorganic pyrophosphatase</fullName>
        <ecNumber evidence="1">3.6.1.1</ecNumber>
    </recommendedName>
    <alternativeName>
        <fullName evidence="1">Pyrophosphate phospho-hydrolase</fullName>
        <shortName evidence="1">PPase</shortName>
    </alternativeName>
</protein>
<name>PPAC_STAA8</name>
<comment type="catalytic activity">
    <reaction evidence="1">
        <text>diphosphate + H2O = 2 phosphate + H(+)</text>
        <dbReference type="Rhea" id="RHEA:24576"/>
        <dbReference type="ChEBI" id="CHEBI:15377"/>
        <dbReference type="ChEBI" id="CHEBI:15378"/>
        <dbReference type="ChEBI" id="CHEBI:33019"/>
        <dbReference type="ChEBI" id="CHEBI:43474"/>
        <dbReference type="EC" id="3.6.1.1"/>
    </reaction>
</comment>
<comment type="cofactor">
    <cofactor evidence="1">
        <name>Mn(2+)</name>
        <dbReference type="ChEBI" id="CHEBI:29035"/>
    </cofactor>
    <text evidence="1">Binds 2 manganese ions per subunit.</text>
</comment>
<comment type="subcellular location">
    <subcellularLocation>
        <location evidence="1">Cytoplasm</location>
    </subcellularLocation>
</comment>
<comment type="similarity">
    <text evidence="1">Belongs to the PPase class C family.</text>
</comment>
<feature type="chain" id="PRO_1000012320" description="Probable manganese-dependent inorganic pyrophosphatase">
    <location>
        <begin position="1"/>
        <end position="309"/>
    </location>
</feature>
<feature type="binding site" evidence="1">
    <location>
        <position position="9"/>
    </location>
    <ligand>
        <name>Mn(2+)</name>
        <dbReference type="ChEBI" id="CHEBI:29035"/>
        <label>1</label>
    </ligand>
</feature>
<feature type="binding site" evidence="1">
    <location>
        <position position="13"/>
    </location>
    <ligand>
        <name>Mn(2+)</name>
        <dbReference type="ChEBI" id="CHEBI:29035"/>
        <label>1</label>
    </ligand>
</feature>
<feature type="binding site" evidence="1">
    <location>
        <position position="15"/>
    </location>
    <ligand>
        <name>Mn(2+)</name>
        <dbReference type="ChEBI" id="CHEBI:29035"/>
        <label>2</label>
    </ligand>
</feature>
<feature type="binding site" evidence="1">
    <location>
        <position position="75"/>
    </location>
    <ligand>
        <name>Mn(2+)</name>
        <dbReference type="ChEBI" id="CHEBI:29035"/>
        <label>1</label>
    </ligand>
</feature>
<feature type="binding site" evidence="1">
    <location>
        <position position="75"/>
    </location>
    <ligand>
        <name>Mn(2+)</name>
        <dbReference type="ChEBI" id="CHEBI:29035"/>
        <label>2</label>
    </ligand>
</feature>
<feature type="binding site" evidence="1">
    <location>
        <position position="97"/>
    </location>
    <ligand>
        <name>Mn(2+)</name>
        <dbReference type="ChEBI" id="CHEBI:29035"/>
        <label>2</label>
    </ligand>
</feature>
<feature type="binding site" evidence="1">
    <location>
        <position position="149"/>
    </location>
    <ligand>
        <name>Mn(2+)</name>
        <dbReference type="ChEBI" id="CHEBI:29035"/>
        <label>2</label>
    </ligand>
</feature>
<sequence length="309" mass="34069">MAKTYIFGHKNPDTDAISSAIIMAEFEQLRGNSGAKAYRLGDVSAETQFALDTFNVPAPELLTDDLDGQDVILVDHNEFQQSSDTIASATIKHVIDHHRIANFETAGPLCYRAEPVGCTATILYKMFRERGFEIKPEIAGLMLSAIISDSLLFKSPTCTQQDVKAAEELKDIAKVDIQKYGLDMLKAGASTTDKSVEFLLNMDAKSFTMGDYVTRIAQVNAVDLDEVLNRKEDLEKEMLAVSAQEKYDLFVLVVTDIINSDSKILVVGAEKDKVGEAFNVQLEDDMAFLSGVVSRKKQIVPQITEALTK</sequence>
<gene>
    <name evidence="1" type="primary">ppaC</name>
    <name type="ordered locus">SAOUHSC_02140</name>
</gene>
<organism>
    <name type="scientific">Staphylococcus aureus (strain NCTC 8325 / PS 47)</name>
    <dbReference type="NCBI Taxonomy" id="93061"/>
    <lineage>
        <taxon>Bacteria</taxon>
        <taxon>Bacillati</taxon>
        <taxon>Bacillota</taxon>
        <taxon>Bacilli</taxon>
        <taxon>Bacillales</taxon>
        <taxon>Staphylococcaceae</taxon>
        <taxon>Staphylococcus</taxon>
    </lineage>
</organism>